<keyword id="KW-1015">Disulfide bond</keyword>
<keyword id="KW-0964">Secreted</keyword>
<keyword id="KW-0732">Signal</keyword>
<keyword id="KW-0800">Toxin</keyword>
<feature type="signal peptide" evidence="1">
    <location>
        <begin position="1"/>
        <end position="23"/>
    </location>
</feature>
<feature type="chain" id="PRO_0000446759" description="U-scoloptoxin(10)-Sm3a" evidence="3">
    <location>
        <begin position="24"/>
        <end position="105"/>
    </location>
</feature>
<protein>
    <recommendedName>
        <fullName evidence="2">U-scoloptoxin(10)-Sm3a</fullName>
        <shortName evidence="2">U-SLPTX(10)-Sm3a</shortName>
    </recommendedName>
</protein>
<name>TXA3A_SCOMO</name>
<accession>P0DPY6</accession>
<evidence type="ECO:0000255" key="1"/>
<evidence type="ECO:0000303" key="2">
    <source>
    </source>
</evidence>
<evidence type="ECO:0000305" key="3"/>
<evidence type="ECO:0000305" key="4">
    <source>
    </source>
</evidence>
<organism>
    <name type="scientific">Scolopendra morsitans</name>
    <name type="common">Tanzanian blue ringleg centipede</name>
    <dbReference type="NCBI Taxonomy" id="943129"/>
    <lineage>
        <taxon>Eukaryota</taxon>
        <taxon>Metazoa</taxon>
        <taxon>Ecdysozoa</taxon>
        <taxon>Arthropoda</taxon>
        <taxon>Myriapoda</taxon>
        <taxon>Chilopoda</taxon>
        <taxon>Pleurostigmophora</taxon>
        <taxon>Scolopendromorpha</taxon>
        <taxon>Scolopendridae</taxon>
        <taxon>Scolopendra</taxon>
    </lineage>
</organism>
<dbReference type="GO" id="GO:0005576">
    <property type="term" value="C:extracellular region"/>
    <property type="evidence" value="ECO:0007669"/>
    <property type="project" value="UniProtKB-SubCell"/>
</dbReference>
<dbReference type="GO" id="GO:0090729">
    <property type="term" value="F:toxin activity"/>
    <property type="evidence" value="ECO:0007669"/>
    <property type="project" value="UniProtKB-KW"/>
</dbReference>
<reference key="1">
    <citation type="journal article" date="2014" name="Mol. Biol. Evol.">
        <title>Clawing through evolution: toxin diversification and convergence in the ancient lineage Chilopoda (centipedes).</title>
        <authorList>
            <person name="Undheim E.A."/>
            <person name="Jones A."/>
            <person name="Clauser K.R."/>
            <person name="Holland J.W."/>
            <person name="Pineda S.S."/>
            <person name="King G.F."/>
            <person name="Fry B.G."/>
        </authorList>
    </citation>
    <scope>NUCLEOTIDE SEQUENCE [MRNA]</scope>
    <scope>NOMENCLATURE</scope>
    <source>
        <tissue>Venom gland</tissue>
    </source>
</reference>
<proteinExistence type="inferred from homology"/>
<comment type="subcellular location">
    <subcellularLocation>
        <location evidence="4">Secreted</location>
    </subcellularLocation>
</comment>
<comment type="tissue specificity">
    <text evidence="4">Expressed by the venom gland.</text>
</comment>
<comment type="PTM">
    <text evidence="3">Contains 3 disulfide bonds.</text>
</comment>
<comment type="similarity">
    <text evidence="3">Belongs to the scoloptoxin-10 family.</text>
</comment>
<comment type="caution">
    <text evidence="4">All S.morsitans family members described in 'Undeheim et al., 2014' have not been imported into UniProtKB. Please, refer to this paper to access them.</text>
</comment>
<comment type="caution">
    <text evidence="4">The sequence shown in supplementary file S2 does not show the GASH01000119 sequence, but the GASH01000117 sequence.</text>
</comment>
<comment type="online information" name="National Center for Biotechnology Information (NCBI)">
    <link uri="https://www.ncbi.nlm.nih.gov/nuccore/GASH01000119"/>
</comment>
<sequence length="105" mass="12355">MYKFIFIFFTVFFLINIIEESXTXKVEDLPLPKSYTNALQQHLEKDKKRPDLQELTKKNFKTNRKSCMTNCSHVEGCFLLSPECCPKMTPTCLELDIVKEHLKKN</sequence>